<keyword id="KW-0378">Hydrolase</keyword>
<keyword id="KW-0460">Magnesium</keyword>
<keyword id="KW-0479">Metal-binding</keyword>
<keyword id="KW-1185">Reference proteome</keyword>
<gene>
    <name type="primary">impA</name>
    <name type="ordered locus">MSMEG_3210</name>
    <name type="ordered locus">MSMEI_3128</name>
</gene>
<protein>
    <recommendedName>
        <fullName>Inositol-1-monophosphatase ImpA</fullName>
        <shortName>I-1-Pase</shortName>
        <shortName>IMPase</shortName>
        <shortName>Inositol-1-phosphatase</shortName>
        <ecNumber>3.1.3.25</ecNumber>
    </recommendedName>
</protein>
<name>IMPA_MYCS2</name>
<proteinExistence type="evidence at protein level"/>
<reference key="1">
    <citation type="journal article" date="1997" name="J. Bacteriol.">
        <title>A Mycobacterium smegmatis mutant with a defective inositol monophosphate phosphatase gene homolog has altered cell envelope permeability.</title>
        <authorList>
            <person name="Parish T."/>
            <person name="Liu J."/>
            <person name="Nikaido H."/>
            <person name="Stoker N.G."/>
        </authorList>
    </citation>
    <scope>NUCLEOTIDE SEQUENCE [GENOMIC DNA]</scope>
    <scope>FUNCTION IN INOSITOL BIOSYNTHESIS</scope>
    <scope>GENE NAME</scope>
    <scope>PATHWAY</scope>
    <scope>DISRUPTION PHENOTYPE</scope>
    <source>
        <strain>ATCC 700084 / mc(2)155</strain>
    </source>
</reference>
<reference key="2">
    <citation type="submission" date="2006-10" db="EMBL/GenBank/DDBJ databases">
        <authorList>
            <person name="Fleischmann R.D."/>
            <person name="Dodson R.J."/>
            <person name="Haft D.H."/>
            <person name="Merkel J.S."/>
            <person name="Nelson W.C."/>
            <person name="Fraser C.M."/>
        </authorList>
    </citation>
    <scope>NUCLEOTIDE SEQUENCE [LARGE SCALE GENOMIC DNA]</scope>
    <source>
        <strain>ATCC 700084 / mc(2)155</strain>
    </source>
</reference>
<reference key="3">
    <citation type="journal article" date="2007" name="Genome Biol.">
        <title>Interrupted coding sequences in Mycobacterium smegmatis: authentic mutations or sequencing errors?</title>
        <authorList>
            <person name="Deshayes C."/>
            <person name="Perrodou E."/>
            <person name="Gallien S."/>
            <person name="Euphrasie D."/>
            <person name="Schaeffer C."/>
            <person name="Van-Dorsselaer A."/>
            <person name="Poch O."/>
            <person name="Lecompte O."/>
            <person name="Reyrat J.-M."/>
        </authorList>
    </citation>
    <scope>NUCLEOTIDE SEQUENCE [LARGE SCALE GENOMIC DNA]</scope>
    <source>
        <strain>ATCC 700084 / mc(2)155</strain>
    </source>
</reference>
<reference key="4">
    <citation type="journal article" date="2009" name="Genome Res.">
        <title>Ortho-proteogenomics: multiple proteomes investigation through orthology and a new MS-based protocol.</title>
        <authorList>
            <person name="Gallien S."/>
            <person name="Perrodou E."/>
            <person name="Carapito C."/>
            <person name="Deshayes C."/>
            <person name="Reyrat J.-M."/>
            <person name="Van Dorsselaer A."/>
            <person name="Poch O."/>
            <person name="Schaeffer C."/>
            <person name="Lecompte O."/>
        </authorList>
    </citation>
    <scope>NUCLEOTIDE SEQUENCE [LARGE SCALE GENOMIC DNA]</scope>
    <source>
        <strain>ATCC 700084 / mc(2)155</strain>
    </source>
</reference>
<accession>A0QX86</accession>
<accession>I7G1F6</accession>
<accession>O51845</accession>
<accession>Q79BH3</accession>
<organism>
    <name type="scientific">Mycolicibacterium smegmatis (strain ATCC 700084 / mc(2)155)</name>
    <name type="common">Mycobacterium smegmatis</name>
    <dbReference type="NCBI Taxonomy" id="246196"/>
    <lineage>
        <taxon>Bacteria</taxon>
        <taxon>Bacillati</taxon>
        <taxon>Actinomycetota</taxon>
        <taxon>Actinomycetes</taxon>
        <taxon>Mycobacteriales</taxon>
        <taxon>Mycobacteriaceae</taxon>
        <taxon>Mycolicibacterium</taxon>
    </lineage>
</organism>
<sequence length="276" mass="28675">MTVVGELDPQKLTALVATAAEILDAASVPFVAGHRADSAVRKQGNDFATEVDLAIERQVVRALTEATGIGVHGEEFGGEPIDSPLVWVLDPIDGTFNYAAGSPMAAILLGLLADGEPVAGLTWLPFTGEKYSALVGGPLYSDGKPCPPLGSPTLADSIIGIQTFNIDSRGRFPGRYRVEVLANLSRVCSRVRMHGATGVDLAYVAAGILGGAISFGHHIWDHAAGVALVRAAGGVVTDLTGAPWTVDSKSVLAAAPGVHEKMLEIVKSTGKPEDYL</sequence>
<dbReference type="EC" id="3.1.3.25"/>
<dbReference type="EMBL" id="AF005905">
    <property type="protein sequence ID" value="AAB94817.1"/>
    <property type="molecule type" value="Genomic_DNA"/>
</dbReference>
<dbReference type="EMBL" id="U77950">
    <property type="protein sequence ID" value="AAB94795.1"/>
    <property type="molecule type" value="Genomic_DNA"/>
</dbReference>
<dbReference type="EMBL" id="CP000480">
    <property type="protein sequence ID" value="ABK70281.1"/>
    <property type="molecule type" value="Genomic_DNA"/>
</dbReference>
<dbReference type="EMBL" id="CP001663">
    <property type="protein sequence ID" value="AFP39592.1"/>
    <property type="molecule type" value="Genomic_DNA"/>
</dbReference>
<dbReference type="RefSeq" id="WP_003894599.1">
    <property type="nucleotide sequence ID" value="NZ_SIJM01000015.1"/>
</dbReference>
<dbReference type="RefSeq" id="YP_887524.1">
    <property type="nucleotide sequence ID" value="NC_008596.1"/>
</dbReference>
<dbReference type="SMR" id="A0QX86"/>
<dbReference type="STRING" id="246196.MSMEG_3210"/>
<dbReference type="PaxDb" id="246196-MSMEI_3128"/>
<dbReference type="KEGG" id="msb:LJ00_15960"/>
<dbReference type="KEGG" id="msg:MSMEI_3128"/>
<dbReference type="KEGG" id="msm:MSMEG_3210"/>
<dbReference type="PATRIC" id="fig|246196.19.peg.3172"/>
<dbReference type="eggNOG" id="COG0483">
    <property type="taxonomic scope" value="Bacteria"/>
</dbReference>
<dbReference type="OrthoDB" id="9772456at2"/>
<dbReference type="BRENDA" id="3.1.3.11">
    <property type="organism ID" value="3512"/>
</dbReference>
<dbReference type="BRENDA" id="3.1.3.25">
    <property type="organism ID" value="3512"/>
</dbReference>
<dbReference type="UniPathway" id="UPA00823">
    <property type="reaction ID" value="UER00788"/>
</dbReference>
<dbReference type="Proteomes" id="UP000000757">
    <property type="component" value="Chromosome"/>
</dbReference>
<dbReference type="Proteomes" id="UP000006158">
    <property type="component" value="Chromosome"/>
</dbReference>
<dbReference type="GO" id="GO:0008934">
    <property type="term" value="F:inositol monophosphate 1-phosphatase activity"/>
    <property type="evidence" value="ECO:0000315"/>
    <property type="project" value="UniProtKB"/>
</dbReference>
<dbReference type="GO" id="GO:0046872">
    <property type="term" value="F:metal ion binding"/>
    <property type="evidence" value="ECO:0007669"/>
    <property type="project" value="UniProtKB-KW"/>
</dbReference>
<dbReference type="GO" id="GO:0006021">
    <property type="term" value="P:inositol biosynthetic process"/>
    <property type="evidence" value="ECO:0000315"/>
    <property type="project" value="UniProtKB"/>
</dbReference>
<dbReference type="GO" id="GO:0046854">
    <property type="term" value="P:phosphatidylinositol phosphate biosynthetic process"/>
    <property type="evidence" value="ECO:0007669"/>
    <property type="project" value="InterPro"/>
</dbReference>
<dbReference type="GO" id="GO:0007165">
    <property type="term" value="P:signal transduction"/>
    <property type="evidence" value="ECO:0007669"/>
    <property type="project" value="TreeGrafter"/>
</dbReference>
<dbReference type="CDD" id="cd01637">
    <property type="entry name" value="IMPase_like"/>
    <property type="match status" value="1"/>
</dbReference>
<dbReference type="FunFam" id="3.30.540.10:FF:000042">
    <property type="entry name" value="Inositol-monophosphatase ImpA"/>
    <property type="match status" value="1"/>
</dbReference>
<dbReference type="FunFam" id="3.40.190.80:FF:000031">
    <property type="entry name" value="Inositol-monophosphatase ImpA"/>
    <property type="match status" value="1"/>
</dbReference>
<dbReference type="Gene3D" id="3.40.190.80">
    <property type="match status" value="1"/>
</dbReference>
<dbReference type="Gene3D" id="3.30.540.10">
    <property type="entry name" value="Fructose-1,6-Bisphosphatase, subunit A, domain 1"/>
    <property type="match status" value="1"/>
</dbReference>
<dbReference type="InterPro" id="IPR000760">
    <property type="entry name" value="Inositol_monophosphatase-like"/>
</dbReference>
<dbReference type="InterPro" id="IPR020550">
    <property type="entry name" value="Inositol_monophosphatase_CS"/>
</dbReference>
<dbReference type="PANTHER" id="PTHR20854">
    <property type="entry name" value="INOSITOL MONOPHOSPHATASE"/>
    <property type="match status" value="1"/>
</dbReference>
<dbReference type="PANTHER" id="PTHR20854:SF4">
    <property type="entry name" value="INOSITOL-1-MONOPHOSPHATASE-RELATED"/>
    <property type="match status" value="1"/>
</dbReference>
<dbReference type="Pfam" id="PF00459">
    <property type="entry name" value="Inositol_P"/>
    <property type="match status" value="1"/>
</dbReference>
<dbReference type="PRINTS" id="PR00377">
    <property type="entry name" value="IMPHPHTASES"/>
</dbReference>
<dbReference type="SUPFAM" id="SSF56655">
    <property type="entry name" value="Carbohydrate phosphatase"/>
    <property type="match status" value="1"/>
</dbReference>
<dbReference type="PROSITE" id="PS00630">
    <property type="entry name" value="IMP_2"/>
    <property type="match status" value="1"/>
</dbReference>
<comment type="function">
    <text evidence="4">Catalyzes the dephosphorylation of inositol 1-phosphate (I-1-P) to yield free myo-inositol, a key metabolite in mycobacteria.</text>
</comment>
<comment type="catalytic activity">
    <reaction>
        <text>a myo-inositol phosphate + H2O = myo-inositol + phosphate</text>
        <dbReference type="Rhea" id="RHEA:24056"/>
        <dbReference type="ChEBI" id="CHEBI:15377"/>
        <dbReference type="ChEBI" id="CHEBI:17268"/>
        <dbReference type="ChEBI" id="CHEBI:43474"/>
        <dbReference type="ChEBI" id="CHEBI:84139"/>
        <dbReference type="EC" id="3.1.3.25"/>
    </reaction>
</comment>
<comment type="cofactor">
    <cofactor evidence="1">
        <name>Mg(2+)</name>
        <dbReference type="ChEBI" id="CHEBI:18420"/>
    </cofactor>
</comment>
<comment type="pathway">
    <text evidence="2">Polyol metabolism; myo-inositol biosynthesis; myo-inositol from D-glucose 6-phosphate: step 2/2.</text>
</comment>
<comment type="disruption phenotype">
    <text evidence="2">Inactivation of this gene results in an altered colony morphology, reduced levels of PI dimannoside (PIM2), and altered permeability of the cell wall.</text>
</comment>
<comment type="similarity">
    <text evidence="3">Belongs to the inositol monophosphatase superfamily.</text>
</comment>
<evidence type="ECO:0000250" key="1"/>
<evidence type="ECO:0000269" key="2">
    <source>
    </source>
</evidence>
<evidence type="ECO:0000305" key="3"/>
<evidence type="ECO:0000305" key="4">
    <source>
    </source>
</evidence>
<feature type="chain" id="PRO_0000404322" description="Inositol-1-monophosphatase ImpA">
    <location>
        <begin position="1"/>
        <end position="276"/>
    </location>
</feature>
<feature type="binding site" evidence="1">
    <location>
        <position position="74"/>
    </location>
    <ligand>
        <name>Mg(2+)</name>
        <dbReference type="ChEBI" id="CHEBI:18420"/>
        <label>1</label>
    </ligand>
</feature>
<feature type="binding site" evidence="1">
    <location>
        <position position="74"/>
    </location>
    <ligand>
        <name>substrate</name>
    </ligand>
</feature>
<feature type="binding site" evidence="1">
    <location>
        <position position="90"/>
    </location>
    <ligand>
        <name>Mg(2+)</name>
        <dbReference type="ChEBI" id="CHEBI:18420"/>
        <label>1</label>
    </ligand>
</feature>
<feature type="binding site" evidence="1">
    <location>
        <position position="90"/>
    </location>
    <ligand>
        <name>Mg(2+)</name>
        <dbReference type="ChEBI" id="CHEBI:18420"/>
        <label>2</label>
    </ligand>
</feature>
<feature type="binding site" evidence="1">
    <location>
        <begin position="92"/>
        <end position="95"/>
    </location>
    <ligand>
        <name>substrate</name>
    </ligand>
</feature>
<feature type="binding site" evidence="1">
    <location>
        <position position="92"/>
    </location>
    <ligand>
        <name>Mg(2+)</name>
        <dbReference type="ChEBI" id="CHEBI:18420"/>
        <label>1</label>
    </ligand>
</feature>
<feature type="binding site" evidence="1">
    <location>
        <position position="93"/>
    </location>
    <ligand>
        <name>Mg(2+)</name>
        <dbReference type="ChEBI" id="CHEBI:18420"/>
        <label>2</label>
    </ligand>
</feature>
<feature type="binding site" evidence="1">
    <location>
        <position position="192"/>
    </location>
    <ligand>
        <name>substrate</name>
    </ligand>
</feature>
<feature type="binding site" evidence="1">
    <location>
        <position position="221"/>
    </location>
    <ligand>
        <name>Mg(2+)</name>
        <dbReference type="ChEBI" id="CHEBI:18420"/>
        <label>2</label>
    </ligand>
</feature>
<feature type="binding site" evidence="1">
    <location>
        <position position="221"/>
    </location>
    <ligand>
        <name>substrate</name>
    </ligand>
</feature>